<reference key="1">
    <citation type="submission" date="2006-08" db="EMBL/GenBank/DDBJ databases">
        <title>Complete sequence of chromosome 1 of Burkholderia cenocepacia HI2424.</title>
        <authorList>
            <person name="Copeland A."/>
            <person name="Lucas S."/>
            <person name="Lapidus A."/>
            <person name="Barry K."/>
            <person name="Detter J.C."/>
            <person name="Glavina del Rio T."/>
            <person name="Hammon N."/>
            <person name="Israni S."/>
            <person name="Pitluck S."/>
            <person name="Chain P."/>
            <person name="Malfatti S."/>
            <person name="Shin M."/>
            <person name="Vergez L."/>
            <person name="Schmutz J."/>
            <person name="Larimer F."/>
            <person name="Land M."/>
            <person name="Hauser L."/>
            <person name="Kyrpides N."/>
            <person name="Kim E."/>
            <person name="LiPuma J.J."/>
            <person name="Gonzalez C.F."/>
            <person name="Konstantinidis K."/>
            <person name="Tiedje J.M."/>
            <person name="Richardson P."/>
        </authorList>
    </citation>
    <scope>NUCLEOTIDE SEQUENCE [LARGE SCALE GENOMIC DNA]</scope>
    <source>
        <strain>HI2424</strain>
    </source>
</reference>
<name>UPPP1_BURCH</name>
<comment type="function">
    <text evidence="1">Catalyzes the dephosphorylation of undecaprenyl diphosphate (UPP). Confers resistance to bacitracin.</text>
</comment>
<comment type="catalytic activity">
    <reaction evidence="1">
        <text>di-trans,octa-cis-undecaprenyl diphosphate + H2O = di-trans,octa-cis-undecaprenyl phosphate + phosphate + H(+)</text>
        <dbReference type="Rhea" id="RHEA:28094"/>
        <dbReference type="ChEBI" id="CHEBI:15377"/>
        <dbReference type="ChEBI" id="CHEBI:15378"/>
        <dbReference type="ChEBI" id="CHEBI:43474"/>
        <dbReference type="ChEBI" id="CHEBI:58405"/>
        <dbReference type="ChEBI" id="CHEBI:60392"/>
        <dbReference type="EC" id="3.6.1.27"/>
    </reaction>
</comment>
<comment type="subcellular location">
    <subcellularLocation>
        <location evidence="1">Cell inner membrane</location>
        <topology evidence="1">Multi-pass membrane protein</topology>
    </subcellularLocation>
</comment>
<comment type="miscellaneous">
    <text>Bacitracin is thought to be involved in the inhibition of peptidoglycan synthesis by sequestering undecaprenyl diphosphate, thereby reducing the pool of lipid carrier available.</text>
</comment>
<comment type="similarity">
    <text evidence="1">Belongs to the UppP family.</text>
</comment>
<accession>A0K593</accession>
<protein>
    <recommendedName>
        <fullName evidence="1">Undecaprenyl-diphosphatase 1</fullName>
        <ecNumber evidence="1">3.6.1.27</ecNumber>
    </recommendedName>
    <alternativeName>
        <fullName evidence="1">Bacitracin resistance protein 1</fullName>
    </alternativeName>
    <alternativeName>
        <fullName evidence="1">Undecaprenyl pyrophosphate phosphatase 1</fullName>
    </alternativeName>
</protein>
<sequence>MDWILICKALILGVVEGLTEFLPVSSTGHLIVAGSFLNFNDSHAKTFDVVIQFGAILAVCWEYRQRIVSVVSGLPSRPDAQRFTLNVVIATIPAIALGLLFEKKIKAVLFSPVPVAFALVVGGAIILWAEARQRERSEPPRVMSVDALTPLDALKVGIAQCFALVPGMSRSGSTIIGGMLFGLDRRVATEFSFFLAIPIIFGATLYETVKDWQAFTVDSLGLFALGLVAAFVSAFVCVRWLLRYVATHDFTVFAWYRIAFGLFVLLVGYSGWLNWA</sequence>
<keyword id="KW-0046">Antibiotic resistance</keyword>
<keyword id="KW-0997">Cell inner membrane</keyword>
<keyword id="KW-1003">Cell membrane</keyword>
<keyword id="KW-0133">Cell shape</keyword>
<keyword id="KW-0961">Cell wall biogenesis/degradation</keyword>
<keyword id="KW-0378">Hydrolase</keyword>
<keyword id="KW-0472">Membrane</keyword>
<keyword id="KW-0573">Peptidoglycan synthesis</keyword>
<keyword id="KW-0812">Transmembrane</keyword>
<keyword id="KW-1133">Transmembrane helix</keyword>
<evidence type="ECO:0000255" key="1">
    <source>
        <dbReference type="HAMAP-Rule" id="MF_01006"/>
    </source>
</evidence>
<proteinExistence type="inferred from homology"/>
<feature type="chain" id="PRO_0000290691" description="Undecaprenyl-diphosphatase 1">
    <location>
        <begin position="1"/>
        <end position="276"/>
    </location>
</feature>
<feature type="transmembrane region" description="Helical" evidence="1">
    <location>
        <begin position="83"/>
        <end position="103"/>
    </location>
</feature>
<feature type="transmembrane region" description="Helical" evidence="1">
    <location>
        <begin position="108"/>
        <end position="128"/>
    </location>
</feature>
<feature type="transmembrane region" description="Helical" evidence="1">
    <location>
        <begin position="187"/>
        <end position="207"/>
    </location>
</feature>
<feature type="transmembrane region" description="Helical" evidence="1">
    <location>
        <begin position="217"/>
        <end position="237"/>
    </location>
</feature>
<feature type="transmembrane region" description="Helical" evidence="1">
    <location>
        <begin position="252"/>
        <end position="272"/>
    </location>
</feature>
<dbReference type="EC" id="3.6.1.27" evidence="1"/>
<dbReference type="EMBL" id="CP000458">
    <property type="protein sequence ID" value="ABK07670.1"/>
    <property type="molecule type" value="Genomic_DNA"/>
</dbReference>
<dbReference type="RefSeq" id="WP_011544783.1">
    <property type="nucleotide sequence ID" value="NC_008542.1"/>
</dbReference>
<dbReference type="SMR" id="A0K593"/>
<dbReference type="KEGG" id="bch:Bcen2424_0917"/>
<dbReference type="HOGENOM" id="CLU_060296_2_0_4"/>
<dbReference type="GO" id="GO:0005886">
    <property type="term" value="C:plasma membrane"/>
    <property type="evidence" value="ECO:0007669"/>
    <property type="project" value="UniProtKB-SubCell"/>
</dbReference>
<dbReference type="GO" id="GO:0050380">
    <property type="term" value="F:undecaprenyl-diphosphatase activity"/>
    <property type="evidence" value="ECO:0007669"/>
    <property type="project" value="UniProtKB-UniRule"/>
</dbReference>
<dbReference type="GO" id="GO:0071555">
    <property type="term" value="P:cell wall organization"/>
    <property type="evidence" value="ECO:0007669"/>
    <property type="project" value="UniProtKB-KW"/>
</dbReference>
<dbReference type="GO" id="GO:0009252">
    <property type="term" value="P:peptidoglycan biosynthetic process"/>
    <property type="evidence" value="ECO:0007669"/>
    <property type="project" value="UniProtKB-KW"/>
</dbReference>
<dbReference type="GO" id="GO:0008360">
    <property type="term" value="P:regulation of cell shape"/>
    <property type="evidence" value="ECO:0007669"/>
    <property type="project" value="UniProtKB-KW"/>
</dbReference>
<dbReference type="GO" id="GO:0046677">
    <property type="term" value="P:response to antibiotic"/>
    <property type="evidence" value="ECO:0007669"/>
    <property type="project" value="UniProtKB-UniRule"/>
</dbReference>
<dbReference type="HAMAP" id="MF_01006">
    <property type="entry name" value="Undec_diphosphatase"/>
    <property type="match status" value="1"/>
</dbReference>
<dbReference type="InterPro" id="IPR003824">
    <property type="entry name" value="UppP"/>
</dbReference>
<dbReference type="NCBIfam" id="NF001389">
    <property type="entry name" value="PRK00281.1-2"/>
    <property type="match status" value="1"/>
</dbReference>
<dbReference type="NCBIfam" id="NF001390">
    <property type="entry name" value="PRK00281.1-4"/>
    <property type="match status" value="1"/>
</dbReference>
<dbReference type="NCBIfam" id="TIGR00753">
    <property type="entry name" value="undec_PP_bacA"/>
    <property type="match status" value="1"/>
</dbReference>
<dbReference type="PANTHER" id="PTHR30622">
    <property type="entry name" value="UNDECAPRENYL-DIPHOSPHATASE"/>
    <property type="match status" value="1"/>
</dbReference>
<dbReference type="PANTHER" id="PTHR30622:SF3">
    <property type="entry name" value="UNDECAPRENYL-DIPHOSPHATASE"/>
    <property type="match status" value="1"/>
</dbReference>
<dbReference type="Pfam" id="PF02673">
    <property type="entry name" value="BacA"/>
    <property type="match status" value="1"/>
</dbReference>
<gene>
    <name evidence="1" type="primary">uppP1</name>
    <name type="ordered locus">Bcen2424_0917</name>
</gene>
<organism>
    <name type="scientific">Burkholderia cenocepacia (strain HI2424)</name>
    <dbReference type="NCBI Taxonomy" id="331272"/>
    <lineage>
        <taxon>Bacteria</taxon>
        <taxon>Pseudomonadati</taxon>
        <taxon>Pseudomonadota</taxon>
        <taxon>Betaproteobacteria</taxon>
        <taxon>Burkholderiales</taxon>
        <taxon>Burkholderiaceae</taxon>
        <taxon>Burkholderia</taxon>
        <taxon>Burkholderia cepacia complex</taxon>
    </lineage>
</organism>